<sequence length="343" mass="40032">MTYISRTMLWQRYLGTRISSTILPVAVRRIHYGGGRLQDPRYVFSKPPTNDPNQSKEGRDGKHFFTPSVNDGTENSTLHNNSRLSESEMSSIANAIAEQKRKRLKRSIITIFSAFVTAVLGYTIGYKVWYLKEQSFIPLYPCSRVRKLSTRDLRRVSVKKIEDISEVRVLERLSQHKMIQEEYGVPLRDSNGKAPHVSDFSVWCEDQDPCVTGLVFEPDSNRQSSHSWYRIPYVFKWRITHRPISISSFIDDVLNWINVSTSDLFEVISPEKVYGSFKYEYPIQGDNHSLHICFLGEMKLDENTTVIYKGKYHVDVKLERIDLLRTENKKLVRYILFKEEDEK</sequence>
<protein>
    <recommendedName>
        <fullName>Altered inheritance of mitochondria protein 39, mitochondrial</fullName>
    </recommendedName>
</protein>
<comment type="subcellular location">
    <subcellularLocation>
        <location evidence="3">Mitochondrion membrane</location>
        <topology evidence="3">Single-pass membrane protein</topology>
    </subcellularLocation>
</comment>
<comment type="similarity">
    <text evidence="3">Belongs to the AIM39 family.</text>
</comment>
<name>AIM39_CANGA</name>
<evidence type="ECO:0000255" key="1"/>
<evidence type="ECO:0000256" key="2">
    <source>
        <dbReference type="SAM" id="MobiDB-lite"/>
    </source>
</evidence>
<evidence type="ECO:0000305" key="3"/>
<gene>
    <name type="primary">AIM39</name>
    <name type="ordered locus">CAGL0I09966g</name>
</gene>
<feature type="transit peptide" description="Mitochondrion" evidence="1">
    <location>
        <begin position="1"/>
        <end position="29"/>
    </location>
</feature>
<feature type="chain" id="PRO_0000399843" description="Altered inheritance of mitochondria protein 39, mitochondrial">
    <location>
        <begin position="30"/>
        <end position="343"/>
    </location>
</feature>
<feature type="transmembrane region" description="Helical" evidence="1">
    <location>
        <begin position="108"/>
        <end position="130"/>
    </location>
</feature>
<feature type="region of interest" description="Disordered" evidence="2">
    <location>
        <begin position="41"/>
        <end position="84"/>
    </location>
</feature>
<feature type="compositionally biased region" description="Basic and acidic residues" evidence="2">
    <location>
        <begin position="54"/>
        <end position="63"/>
    </location>
</feature>
<feature type="compositionally biased region" description="Polar residues" evidence="2">
    <location>
        <begin position="67"/>
        <end position="84"/>
    </location>
</feature>
<proteinExistence type="inferred from homology"/>
<keyword id="KW-0472">Membrane</keyword>
<keyword id="KW-0496">Mitochondrion</keyword>
<keyword id="KW-1185">Reference proteome</keyword>
<keyword id="KW-0809">Transit peptide</keyword>
<keyword id="KW-0812">Transmembrane</keyword>
<keyword id="KW-1133">Transmembrane helix</keyword>
<dbReference type="EMBL" id="CR380955">
    <property type="protein sequence ID" value="CAG60617.1"/>
    <property type="molecule type" value="Genomic_DNA"/>
</dbReference>
<dbReference type="RefSeq" id="XP_447680.1">
    <property type="nucleotide sequence ID" value="XM_447680.1"/>
</dbReference>
<dbReference type="FunCoup" id="Q6FQ14">
    <property type="interactions" value="36"/>
</dbReference>
<dbReference type="EnsemblFungi" id="CAGL0I09966g-T">
    <property type="protein sequence ID" value="CAGL0I09966g-T-p1"/>
    <property type="gene ID" value="CAGL0I09966g"/>
</dbReference>
<dbReference type="KEGG" id="cgr:2889279"/>
<dbReference type="CGD" id="CAL0132116">
    <property type="gene designation" value="CAGL0I09966g"/>
</dbReference>
<dbReference type="VEuPathDB" id="FungiDB:CAGL0I09966g"/>
<dbReference type="eggNOG" id="ENOG502QT12">
    <property type="taxonomic scope" value="Eukaryota"/>
</dbReference>
<dbReference type="HOGENOM" id="CLU_058942_0_0_1"/>
<dbReference type="InParanoid" id="Q6FQ14"/>
<dbReference type="OMA" id="WCEDQDP"/>
<dbReference type="Proteomes" id="UP000002428">
    <property type="component" value="Chromosome I"/>
</dbReference>
<dbReference type="GO" id="GO:0031966">
    <property type="term" value="C:mitochondrial membrane"/>
    <property type="evidence" value="ECO:0007669"/>
    <property type="project" value="UniProtKB-SubCell"/>
</dbReference>
<organism>
    <name type="scientific">Candida glabrata (strain ATCC 2001 / BCRC 20586 / JCM 3761 / NBRC 0622 / NRRL Y-65 / CBS 138)</name>
    <name type="common">Yeast</name>
    <name type="synonym">Nakaseomyces glabratus</name>
    <dbReference type="NCBI Taxonomy" id="284593"/>
    <lineage>
        <taxon>Eukaryota</taxon>
        <taxon>Fungi</taxon>
        <taxon>Dikarya</taxon>
        <taxon>Ascomycota</taxon>
        <taxon>Saccharomycotina</taxon>
        <taxon>Saccharomycetes</taxon>
        <taxon>Saccharomycetales</taxon>
        <taxon>Saccharomycetaceae</taxon>
        <taxon>Nakaseomyces</taxon>
    </lineage>
</organism>
<reference key="1">
    <citation type="journal article" date="2004" name="Nature">
        <title>Genome evolution in yeasts.</title>
        <authorList>
            <person name="Dujon B."/>
            <person name="Sherman D."/>
            <person name="Fischer G."/>
            <person name="Durrens P."/>
            <person name="Casaregola S."/>
            <person name="Lafontaine I."/>
            <person name="de Montigny J."/>
            <person name="Marck C."/>
            <person name="Neuveglise C."/>
            <person name="Talla E."/>
            <person name="Goffard N."/>
            <person name="Frangeul L."/>
            <person name="Aigle M."/>
            <person name="Anthouard V."/>
            <person name="Babour A."/>
            <person name="Barbe V."/>
            <person name="Barnay S."/>
            <person name="Blanchin S."/>
            <person name="Beckerich J.-M."/>
            <person name="Beyne E."/>
            <person name="Bleykasten C."/>
            <person name="Boisrame A."/>
            <person name="Boyer J."/>
            <person name="Cattolico L."/>
            <person name="Confanioleri F."/>
            <person name="de Daruvar A."/>
            <person name="Despons L."/>
            <person name="Fabre E."/>
            <person name="Fairhead C."/>
            <person name="Ferry-Dumazet H."/>
            <person name="Groppi A."/>
            <person name="Hantraye F."/>
            <person name="Hennequin C."/>
            <person name="Jauniaux N."/>
            <person name="Joyet P."/>
            <person name="Kachouri R."/>
            <person name="Kerrest A."/>
            <person name="Koszul R."/>
            <person name="Lemaire M."/>
            <person name="Lesur I."/>
            <person name="Ma L."/>
            <person name="Muller H."/>
            <person name="Nicaud J.-M."/>
            <person name="Nikolski M."/>
            <person name="Oztas S."/>
            <person name="Ozier-Kalogeropoulos O."/>
            <person name="Pellenz S."/>
            <person name="Potier S."/>
            <person name="Richard G.-F."/>
            <person name="Straub M.-L."/>
            <person name="Suleau A."/>
            <person name="Swennen D."/>
            <person name="Tekaia F."/>
            <person name="Wesolowski-Louvel M."/>
            <person name="Westhof E."/>
            <person name="Wirth B."/>
            <person name="Zeniou-Meyer M."/>
            <person name="Zivanovic Y."/>
            <person name="Bolotin-Fukuhara M."/>
            <person name="Thierry A."/>
            <person name="Bouchier C."/>
            <person name="Caudron B."/>
            <person name="Scarpelli C."/>
            <person name="Gaillardin C."/>
            <person name="Weissenbach J."/>
            <person name="Wincker P."/>
            <person name="Souciet J.-L."/>
        </authorList>
    </citation>
    <scope>NUCLEOTIDE SEQUENCE [LARGE SCALE GENOMIC DNA]</scope>
    <source>
        <strain>ATCC 2001 / BCRC 20586 / JCM 3761 / NBRC 0622 / NRRL Y-65 / CBS 138</strain>
    </source>
</reference>
<accession>Q6FQ14</accession>